<name>PHS_THEVB</name>
<sequence length="95" mass="10412">MAERLSPADIEAQLANLPGWKQVGDRLEQTFTFKDFLGSIAFVNRLVDPAEQAGHHPDLSISWNRVTVCLTTHDVGGITQKDIDLAKVISNLAVV</sequence>
<reference key="1">
    <citation type="journal article" date="2002" name="DNA Res.">
        <title>Complete genome structure of the thermophilic cyanobacterium Thermosynechococcus elongatus BP-1.</title>
        <authorList>
            <person name="Nakamura Y."/>
            <person name="Kaneko T."/>
            <person name="Sato S."/>
            <person name="Ikeuchi M."/>
            <person name="Katoh H."/>
            <person name="Sasamoto S."/>
            <person name="Watanabe A."/>
            <person name="Iriguchi M."/>
            <person name="Kawashima K."/>
            <person name="Kimura T."/>
            <person name="Kishida Y."/>
            <person name="Kiyokawa C."/>
            <person name="Kohara M."/>
            <person name="Matsumoto M."/>
            <person name="Matsuno A."/>
            <person name="Nakazaki N."/>
            <person name="Shimpo S."/>
            <person name="Sugimoto M."/>
            <person name="Takeuchi C."/>
            <person name="Yamada M."/>
            <person name="Tabata S."/>
        </authorList>
    </citation>
    <scope>NUCLEOTIDE SEQUENCE [LARGE SCALE GENOMIC DNA]</scope>
    <source>
        <strain>NIES-2133 / IAM M-273 / BP-1</strain>
    </source>
</reference>
<dbReference type="EC" id="4.2.1.96" evidence="1"/>
<dbReference type="EMBL" id="BA000039">
    <property type="protein sequence ID" value="BAC09377.1"/>
    <property type="molecule type" value="Genomic_DNA"/>
</dbReference>
<dbReference type="RefSeq" id="NP_682615.1">
    <property type="nucleotide sequence ID" value="NC_004113.1"/>
</dbReference>
<dbReference type="RefSeq" id="WP_011057662.1">
    <property type="nucleotide sequence ID" value="NC_004113.1"/>
</dbReference>
<dbReference type="SMR" id="Q8DHW8"/>
<dbReference type="STRING" id="197221.gene:10748430"/>
<dbReference type="EnsemblBacteria" id="BAC09377">
    <property type="protein sequence ID" value="BAC09377"/>
    <property type="gene ID" value="BAC09377"/>
</dbReference>
<dbReference type="KEGG" id="tel:tsl1825"/>
<dbReference type="PATRIC" id="fig|197221.4.peg.1908"/>
<dbReference type="eggNOG" id="COG2154">
    <property type="taxonomic scope" value="Bacteria"/>
</dbReference>
<dbReference type="Proteomes" id="UP000000440">
    <property type="component" value="Chromosome"/>
</dbReference>
<dbReference type="GO" id="GO:0008124">
    <property type="term" value="F:4-alpha-hydroxytetrahydrobiopterin dehydratase activity"/>
    <property type="evidence" value="ECO:0007669"/>
    <property type="project" value="UniProtKB-UniRule"/>
</dbReference>
<dbReference type="GO" id="GO:0006729">
    <property type="term" value="P:tetrahydrobiopterin biosynthetic process"/>
    <property type="evidence" value="ECO:0007669"/>
    <property type="project" value="InterPro"/>
</dbReference>
<dbReference type="CDD" id="cd00488">
    <property type="entry name" value="PCD_DCoH"/>
    <property type="match status" value="1"/>
</dbReference>
<dbReference type="Gene3D" id="3.30.1360.20">
    <property type="entry name" value="Transcriptional coactivator/pterin dehydratase"/>
    <property type="match status" value="1"/>
</dbReference>
<dbReference type="HAMAP" id="MF_00434">
    <property type="entry name" value="Pterin_4_alpha"/>
    <property type="match status" value="1"/>
</dbReference>
<dbReference type="InterPro" id="IPR036428">
    <property type="entry name" value="PCD_sf"/>
</dbReference>
<dbReference type="InterPro" id="IPR001533">
    <property type="entry name" value="Pterin_deHydtase"/>
</dbReference>
<dbReference type="NCBIfam" id="NF002017">
    <property type="entry name" value="PRK00823.1-2"/>
    <property type="match status" value="1"/>
</dbReference>
<dbReference type="PANTHER" id="PTHR12599">
    <property type="entry name" value="PTERIN-4-ALPHA-CARBINOLAMINE DEHYDRATASE"/>
    <property type="match status" value="1"/>
</dbReference>
<dbReference type="PANTHER" id="PTHR12599:SF0">
    <property type="entry name" value="PTERIN-4-ALPHA-CARBINOLAMINE DEHYDRATASE"/>
    <property type="match status" value="1"/>
</dbReference>
<dbReference type="Pfam" id="PF01329">
    <property type="entry name" value="Pterin_4a"/>
    <property type="match status" value="1"/>
</dbReference>
<dbReference type="SUPFAM" id="SSF55248">
    <property type="entry name" value="PCD-like"/>
    <property type="match status" value="1"/>
</dbReference>
<gene>
    <name type="ordered locus">tsl1825</name>
</gene>
<feature type="chain" id="PRO_0000063098" description="Putative pterin-4-alpha-carbinolamine dehydratase">
    <location>
        <begin position="1"/>
        <end position="95"/>
    </location>
</feature>
<keyword id="KW-0456">Lyase</keyword>
<keyword id="KW-1185">Reference proteome</keyword>
<comment type="catalytic activity">
    <reaction evidence="1">
        <text>(4aS,6R)-4a-hydroxy-L-erythro-5,6,7,8-tetrahydrobiopterin = (6R)-L-erythro-6,7-dihydrobiopterin + H2O</text>
        <dbReference type="Rhea" id="RHEA:11920"/>
        <dbReference type="ChEBI" id="CHEBI:15377"/>
        <dbReference type="ChEBI" id="CHEBI:15642"/>
        <dbReference type="ChEBI" id="CHEBI:43120"/>
        <dbReference type="EC" id="4.2.1.96"/>
    </reaction>
</comment>
<comment type="similarity">
    <text evidence="1">Belongs to the pterin-4-alpha-carbinolamine dehydratase family.</text>
</comment>
<protein>
    <recommendedName>
        <fullName evidence="1">Putative pterin-4-alpha-carbinolamine dehydratase</fullName>
        <shortName evidence="1">PHS</shortName>
        <ecNumber evidence="1">4.2.1.96</ecNumber>
    </recommendedName>
    <alternativeName>
        <fullName evidence="1">4-alpha-hydroxy-tetrahydropterin dehydratase</fullName>
    </alternativeName>
    <alternativeName>
        <fullName evidence="1">Pterin carbinolamine dehydratase</fullName>
        <shortName evidence="1">PCD</shortName>
    </alternativeName>
</protein>
<organism>
    <name type="scientific">Thermosynechococcus vestitus (strain NIES-2133 / IAM M-273 / BP-1)</name>
    <dbReference type="NCBI Taxonomy" id="197221"/>
    <lineage>
        <taxon>Bacteria</taxon>
        <taxon>Bacillati</taxon>
        <taxon>Cyanobacteriota</taxon>
        <taxon>Cyanophyceae</taxon>
        <taxon>Acaryochloridales</taxon>
        <taxon>Thermosynechococcaceae</taxon>
        <taxon>Thermosynechococcus</taxon>
    </lineage>
</organism>
<proteinExistence type="inferred from homology"/>
<accession>Q8DHW8</accession>
<evidence type="ECO:0000255" key="1">
    <source>
        <dbReference type="HAMAP-Rule" id="MF_00434"/>
    </source>
</evidence>